<organism>
    <name type="scientific">Bartonella henselae (strain ATCC 49882 / DSM 28221 / CCUG 30454 / Houston 1)</name>
    <name type="common">Rochalimaea henselae</name>
    <dbReference type="NCBI Taxonomy" id="283166"/>
    <lineage>
        <taxon>Bacteria</taxon>
        <taxon>Pseudomonadati</taxon>
        <taxon>Pseudomonadota</taxon>
        <taxon>Alphaproteobacteria</taxon>
        <taxon>Hyphomicrobiales</taxon>
        <taxon>Bartonellaceae</taxon>
        <taxon>Bartonella</taxon>
    </lineage>
</organism>
<comment type="function">
    <text evidence="1">Catalyzes the condensation of (S)-aspartate-beta-semialdehyde [(S)-ASA] and pyruvate to 4-hydroxy-tetrahydrodipicolinate (HTPA).</text>
</comment>
<comment type="catalytic activity">
    <reaction evidence="1">
        <text>L-aspartate 4-semialdehyde + pyruvate = (2S,4S)-4-hydroxy-2,3,4,5-tetrahydrodipicolinate + H2O + H(+)</text>
        <dbReference type="Rhea" id="RHEA:34171"/>
        <dbReference type="ChEBI" id="CHEBI:15361"/>
        <dbReference type="ChEBI" id="CHEBI:15377"/>
        <dbReference type="ChEBI" id="CHEBI:15378"/>
        <dbReference type="ChEBI" id="CHEBI:67139"/>
        <dbReference type="ChEBI" id="CHEBI:537519"/>
        <dbReference type="EC" id="4.3.3.7"/>
    </reaction>
</comment>
<comment type="pathway">
    <text evidence="1">Amino-acid biosynthesis; L-lysine biosynthesis via DAP pathway; (S)-tetrahydrodipicolinate from L-aspartate: step 3/4.</text>
</comment>
<comment type="subunit">
    <text evidence="1">Homotetramer; dimer of dimers.</text>
</comment>
<comment type="subcellular location">
    <subcellularLocation>
        <location evidence="1">Cytoplasm</location>
    </subcellularLocation>
</comment>
<comment type="similarity">
    <text evidence="1">Belongs to the DapA family.</text>
</comment>
<comment type="caution">
    <text evidence="2">Was originally thought to be a dihydrodipicolinate synthase (DHDPS), catalyzing the condensation of (S)-aspartate-beta-semialdehyde [(S)-ASA] and pyruvate to dihydrodipicolinate (DHDP). However, it was shown in E.coli that the product of the enzymatic reaction is not dihydrodipicolinate but in fact (4S)-4-hydroxy-2,3,4,5-tetrahydro-(2S)-dipicolinic acid (HTPA), and that the consecutive dehydration reaction leading to DHDP is not spontaneous but catalyzed by DapB.</text>
</comment>
<name>DAPA_BARHE</name>
<accession>Q6G468</accession>
<proteinExistence type="evidence at protein level"/>
<feature type="chain" id="PRO_1000050166" description="4-hydroxy-tetrahydrodipicolinate synthase">
    <location>
        <begin position="1"/>
        <end position="294"/>
    </location>
</feature>
<feature type="active site" description="Proton donor/acceptor" evidence="1">
    <location>
        <position position="133"/>
    </location>
</feature>
<feature type="active site" description="Schiff-base intermediate with substrate" evidence="1">
    <location>
        <position position="162"/>
    </location>
</feature>
<feature type="binding site" evidence="1">
    <location>
        <position position="45"/>
    </location>
    <ligand>
        <name>pyruvate</name>
        <dbReference type="ChEBI" id="CHEBI:15361"/>
    </ligand>
</feature>
<feature type="binding site" evidence="1">
    <location>
        <position position="204"/>
    </location>
    <ligand>
        <name>pyruvate</name>
        <dbReference type="ChEBI" id="CHEBI:15361"/>
    </ligand>
</feature>
<feature type="site" description="Part of a proton relay during catalysis" evidence="1">
    <location>
        <position position="44"/>
    </location>
</feature>
<feature type="site" description="Part of a proton relay during catalysis" evidence="1">
    <location>
        <position position="107"/>
    </location>
</feature>
<feature type="strand" evidence="3">
    <location>
        <begin position="4"/>
        <end position="8"/>
    </location>
</feature>
<feature type="helix" evidence="3">
    <location>
        <begin position="21"/>
        <end position="33"/>
    </location>
</feature>
<feature type="strand" evidence="3">
    <location>
        <begin position="37"/>
        <end position="40"/>
    </location>
</feature>
<feature type="turn" evidence="3">
    <location>
        <begin position="44"/>
        <end position="47"/>
    </location>
</feature>
<feature type="helix" evidence="3">
    <location>
        <begin position="48"/>
        <end position="50"/>
    </location>
</feature>
<feature type="helix" evidence="3">
    <location>
        <begin position="53"/>
        <end position="67"/>
    </location>
</feature>
<feature type="strand" evidence="3">
    <location>
        <begin position="73"/>
        <end position="76"/>
    </location>
</feature>
<feature type="helix" evidence="3">
    <location>
        <begin position="82"/>
        <end position="94"/>
    </location>
</feature>
<feature type="strand" evidence="3">
    <location>
        <begin position="98"/>
        <end position="103"/>
    </location>
</feature>
<feature type="helix" evidence="3">
    <location>
        <begin position="112"/>
        <end position="125"/>
    </location>
</feature>
<feature type="strand" evidence="3">
    <location>
        <begin position="130"/>
        <end position="134"/>
    </location>
</feature>
<feature type="helix" evidence="3">
    <location>
        <begin position="136"/>
        <end position="139"/>
    </location>
</feature>
<feature type="helix" evidence="3">
    <location>
        <begin position="145"/>
        <end position="154"/>
    </location>
</feature>
<feature type="strand" evidence="3">
    <location>
        <begin position="158"/>
        <end position="163"/>
    </location>
</feature>
<feature type="helix" evidence="3">
    <location>
        <begin position="169"/>
        <end position="178"/>
    </location>
</feature>
<feature type="strand" evidence="3">
    <location>
        <begin position="180"/>
        <end position="187"/>
    </location>
</feature>
<feature type="helix" evidence="3">
    <location>
        <begin position="189"/>
        <end position="191"/>
    </location>
</feature>
<feature type="helix" evidence="3">
    <location>
        <begin position="192"/>
        <end position="197"/>
    </location>
</feature>
<feature type="strand" evidence="3">
    <location>
        <begin position="202"/>
        <end position="206"/>
    </location>
</feature>
<feature type="helix" evidence="3">
    <location>
        <begin position="207"/>
        <end position="209"/>
    </location>
</feature>
<feature type="helix" evidence="3">
    <location>
        <begin position="212"/>
        <end position="223"/>
    </location>
</feature>
<feature type="helix" evidence="3">
    <location>
        <begin position="227"/>
        <end position="243"/>
    </location>
</feature>
<feature type="strand" evidence="3">
    <location>
        <begin position="246"/>
        <end position="248"/>
    </location>
</feature>
<feature type="helix" evidence="3">
    <location>
        <begin position="251"/>
        <end position="259"/>
    </location>
</feature>
<feature type="helix" evidence="3">
    <location>
        <begin position="276"/>
        <end position="288"/>
    </location>
</feature>
<dbReference type="EC" id="4.3.3.7" evidence="1"/>
<dbReference type="EMBL" id="BX897699">
    <property type="protein sequence ID" value="CAF27308.1"/>
    <property type="molecule type" value="Genomic_DNA"/>
</dbReference>
<dbReference type="RefSeq" id="WP_011180431.1">
    <property type="nucleotide sequence ID" value="NZ_LRIJ02000001.1"/>
</dbReference>
<dbReference type="PDB" id="3SI9">
    <property type="method" value="X-ray"/>
    <property type="resolution" value="2.10 A"/>
    <property type="chains" value="A/B/C/D=1-294"/>
</dbReference>
<dbReference type="PDBsum" id="3SI9"/>
<dbReference type="SMR" id="Q6G468"/>
<dbReference type="PaxDb" id="283166-BH05000"/>
<dbReference type="EnsemblBacteria" id="CAF27308">
    <property type="protein sequence ID" value="CAF27308"/>
    <property type="gene ID" value="BH05000"/>
</dbReference>
<dbReference type="GeneID" id="92985157"/>
<dbReference type="KEGG" id="bhe:BH05000"/>
<dbReference type="eggNOG" id="COG0329">
    <property type="taxonomic scope" value="Bacteria"/>
</dbReference>
<dbReference type="OrthoDB" id="9782828at2"/>
<dbReference type="BRENDA" id="4.3.3.7">
    <property type="organism ID" value="7854"/>
</dbReference>
<dbReference type="UniPathway" id="UPA00034">
    <property type="reaction ID" value="UER00017"/>
</dbReference>
<dbReference type="EvolutionaryTrace" id="Q6G468"/>
<dbReference type="Proteomes" id="UP000000421">
    <property type="component" value="Chromosome"/>
</dbReference>
<dbReference type="GO" id="GO:0005829">
    <property type="term" value="C:cytosol"/>
    <property type="evidence" value="ECO:0007669"/>
    <property type="project" value="TreeGrafter"/>
</dbReference>
<dbReference type="GO" id="GO:0008840">
    <property type="term" value="F:4-hydroxy-tetrahydrodipicolinate synthase activity"/>
    <property type="evidence" value="ECO:0007669"/>
    <property type="project" value="UniProtKB-UniRule"/>
</dbReference>
<dbReference type="GO" id="GO:0019877">
    <property type="term" value="P:diaminopimelate biosynthetic process"/>
    <property type="evidence" value="ECO:0007669"/>
    <property type="project" value="UniProtKB-UniRule"/>
</dbReference>
<dbReference type="GO" id="GO:0009089">
    <property type="term" value="P:lysine biosynthetic process via diaminopimelate"/>
    <property type="evidence" value="ECO:0007669"/>
    <property type="project" value="UniProtKB-UniRule"/>
</dbReference>
<dbReference type="CDD" id="cd00950">
    <property type="entry name" value="DHDPS"/>
    <property type="match status" value="1"/>
</dbReference>
<dbReference type="Gene3D" id="3.20.20.70">
    <property type="entry name" value="Aldolase class I"/>
    <property type="match status" value="1"/>
</dbReference>
<dbReference type="HAMAP" id="MF_00418">
    <property type="entry name" value="DapA"/>
    <property type="match status" value="1"/>
</dbReference>
<dbReference type="InterPro" id="IPR013785">
    <property type="entry name" value="Aldolase_TIM"/>
</dbReference>
<dbReference type="InterPro" id="IPR005263">
    <property type="entry name" value="DapA"/>
</dbReference>
<dbReference type="InterPro" id="IPR002220">
    <property type="entry name" value="DapA-like"/>
</dbReference>
<dbReference type="InterPro" id="IPR020625">
    <property type="entry name" value="Schiff_base-form_aldolases_AS"/>
</dbReference>
<dbReference type="NCBIfam" id="TIGR00674">
    <property type="entry name" value="dapA"/>
    <property type="match status" value="1"/>
</dbReference>
<dbReference type="PANTHER" id="PTHR12128:SF66">
    <property type="entry name" value="4-HYDROXY-2-OXOGLUTARATE ALDOLASE, MITOCHONDRIAL"/>
    <property type="match status" value="1"/>
</dbReference>
<dbReference type="PANTHER" id="PTHR12128">
    <property type="entry name" value="DIHYDRODIPICOLINATE SYNTHASE"/>
    <property type="match status" value="1"/>
</dbReference>
<dbReference type="Pfam" id="PF00701">
    <property type="entry name" value="DHDPS"/>
    <property type="match status" value="1"/>
</dbReference>
<dbReference type="PIRSF" id="PIRSF001365">
    <property type="entry name" value="DHDPS"/>
    <property type="match status" value="1"/>
</dbReference>
<dbReference type="PRINTS" id="PR00146">
    <property type="entry name" value="DHPICSNTHASE"/>
</dbReference>
<dbReference type="SMART" id="SM01130">
    <property type="entry name" value="DHDPS"/>
    <property type="match status" value="1"/>
</dbReference>
<dbReference type="SUPFAM" id="SSF51569">
    <property type="entry name" value="Aldolase"/>
    <property type="match status" value="1"/>
</dbReference>
<dbReference type="PROSITE" id="PS00666">
    <property type="entry name" value="DHDPS_2"/>
    <property type="match status" value="1"/>
</dbReference>
<evidence type="ECO:0000255" key="1">
    <source>
        <dbReference type="HAMAP-Rule" id="MF_00418"/>
    </source>
</evidence>
<evidence type="ECO:0000305" key="2"/>
<evidence type="ECO:0007829" key="3">
    <source>
        <dbReference type="PDB" id="3SI9"/>
    </source>
</evidence>
<sequence length="294" mass="31483">MLKGAVTALITPFDDNGAIDEKAFCNFVEWQITQGINGVSPVGTTGESPTLTHEEHKRIIELCVEQVAKRVPVVAGAGSNSTSEAVELAKHAEKAGADAVLVVTPYYNRPNQRGLYTHFSSIAKAISIPIIIYNIPSRSVIDMAVETMRDLCRDFKNIIGVKDATGKIERASEQREKCGKDFVQLSGDDCTALGFNAHGGVGCISVSSNVAPKLCAQLHAACLCSDYKTALKLNDLLMPLNRAVFIEPSPAGIKYAAAKLGLCGTIVRSPIVPLSDTTKKIIDEALYHAGLLKE</sequence>
<gene>
    <name evidence="1" type="primary">dapA</name>
    <name type="ordered locus">BH05000</name>
</gene>
<protein>
    <recommendedName>
        <fullName evidence="1">4-hydroxy-tetrahydrodipicolinate synthase</fullName>
        <shortName evidence="1">HTPA synthase</shortName>
        <ecNumber evidence="1">4.3.3.7</ecNumber>
    </recommendedName>
</protein>
<keyword id="KW-0002">3D-structure</keyword>
<keyword id="KW-0028">Amino-acid biosynthesis</keyword>
<keyword id="KW-0963">Cytoplasm</keyword>
<keyword id="KW-0220">Diaminopimelate biosynthesis</keyword>
<keyword id="KW-0456">Lyase</keyword>
<keyword id="KW-0457">Lysine biosynthesis</keyword>
<keyword id="KW-0704">Schiff base</keyword>
<reference key="1">
    <citation type="journal article" date="2004" name="Proc. Natl. Acad. Sci. U.S.A.">
        <title>The louse-borne human pathogen Bartonella quintana is a genomic derivative of the zoonotic agent Bartonella henselae.</title>
        <authorList>
            <person name="Alsmark U.C.M."/>
            <person name="Frank A.C."/>
            <person name="Karlberg E.O."/>
            <person name="Legault B.-A."/>
            <person name="Ardell D.H."/>
            <person name="Canbaeck B."/>
            <person name="Eriksson A.-S."/>
            <person name="Naeslund A.K."/>
            <person name="Handley S.A."/>
            <person name="Huvet M."/>
            <person name="La Scola B."/>
            <person name="Holmberg M."/>
            <person name="Andersson S.G.E."/>
        </authorList>
    </citation>
    <scope>NUCLEOTIDE SEQUENCE [LARGE SCALE GENOMIC DNA]</scope>
    <source>
        <strain>ATCC 49882 / DSM 28221 / CCUG 30454 / Houston 1</strain>
    </source>
</reference>
<reference key="2">
    <citation type="submission" date="2011-06" db="PDB data bank">
        <title>Crystal structure of dihydrodipicolinate synthase from Bartonella henselae.</title>
        <authorList>
            <consortium name="New York structural genomix research consortium (NYSGXRC)"/>
        </authorList>
    </citation>
    <scope>X-RAY CRYSTALLOGRAPHY (2.1 ANGSTROMS)</scope>
    <scope>SUBUNIT</scope>
</reference>